<gene>
    <name type="primary">pnrc2-b</name>
</gene>
<evidence type="ECO:0000250" key="1"/>
<evidence type="ECO:0000256" key="2">
    <source>
        <dbReference type="SAM" id="MobiDB-lite"/>
    </source>
</evidence>
<evidence type="ECO:0000305" key="3"/>
<keyword id="KW-0010">Activator</keyword>
<keyword id="KW-0963">Cytoplasm</keyword>
<keyword id="KW-0866">Nonsense-mediated mRNA decay</keyword>
<keyword id="KW-0539">Nucleus</keyword>
<keyword id="KW-1185">Reference proteome</keyword>
<keyword id="KW-0804">Transcription</keyword>
<keyword id="KW-0805">Transcription regulation</keyword>
<protein>
    <recommendedName>
        <fullName>Proline-rich nuclear receptor coactivator 2 B</fullName>
    </recommendedName>
</protein>
<proteinExistence type="evidence at transcript level"/>
<sequence>MGGGERFNIPGQHRNNLGKQIARQKLFDRNNQKMSMSHTKDRSRGCGTSLAWQAMQNGVNNNTLSSNQNWSAGFPASNNLFTNQDNQNYAGAKFSEPPSPSVLPKPPSHWVLLSCSPAEKELMSFQLKTLLKVQA</sequence>
<dbReference type="EMBL" id="BC084247">
    <property type="protein sequence ID" value="AAH84247.1"/>
    <property type="molecule type" value="mRNA"/>
</dbReference>
<dbReference type="RefSeq" id="NP_001088251.1">
    <property type="nucleotide sequence ID" value="NM_001094782.1"/>
</dbReference>
<dbReference type="DNASU" id="495082"/>
<dbReference type="GeneID" id="495082"/>
<dbReference type="KEGG" id="xla:495082"/>
<dbReference type="AGR" id="Xenbase:XB-GENE-6254524"/>
<dbReference type="CTD" id="495082"/>
<dbReference type="Xenbase" id="XB-GENE-6254524">
    <property type="gene designation" value="pnrc2.S"/>
</dbReference>
<dbReference type="OrthoDB" id="8732832at2759"/>
<dbReference type="Proteomes" id="UP000186698">
    <property type="component" value="Chromosome 2S"/>
</dbReference>
<dbReference type="Bgee" id="495082">
    <property type="expression patterns" value="Expressed in blastula and 19 other cell types or tissues"/>
</dbReference>
<dbReference type="GO" id="GO:0005634">
    <property type="term" value="C:nucleus"/>
    <property type="evidence" value="ECO:0000250"/>
    <property type="project" value="UniProtKB"/>
</dbReference>
<dbReference type="GO" id="GO:0000932">
    <property type="term" value="C:P-body"/>
    <property type="evidence" value="ECO:0000250"/>
    <property type="project" value="UniProtKB"/>
</dbReference>
<dbReference type="GO" id="GO:0000184">
    <property type="term" value="P:nuclear-transcribed mRNA catabolic process, nonsense-mediated decay"/>
    <property type="evidence" value="ECO:0000250"/>
    <property type="project" value="UniProtKB"/>
</dbReference>
<dbReference type="InterPro" id="IPR028322">
    <property type="entry name" value="PNRC-like_rgn"/>
</dbReference>
<dbReference type="InterPro" id="IPR026780">
    <property type="entry name" value="PNRC1/2"/>
</dbReference>
<dbReference type="PANTHER" id="PTHR15405">
    <property type="entry name" value="PROLINE-RICH NUCLEAR RECEPTOR COACTIVATOR"/>
    <property type="match status" value="1"/>
</dbReference>
<dbReference type="Pfam" id="PF15365">
    <property type="entry name" value="PNRC"/>
    <property type="match status" value="1"/>
</dbReference>
<organism>
    <name type="scientific">Xenopus laevis</name>
    <name type="common">African clawed frog</name>
    <dbReference type="NCBI Taxonomy" id="8355"/>
    <lineage>
        <taxon>Eukaryota</taxon>
        <taxon>Metazoa</taxon>
        <taxon>Chordata</taxon>
        <taxon>Craniata</taxon>
        <taxon>Vertebrata</taxon>
        <taxon>Euteleostomi</taxon>
        <taxon>Amphibia</taxon>
        <taxon>Batrachia</taxon>
        <taxon>Anura</taxon>
        <taxon>Pipoidea</taxon>
        <taxon>Pipidae</taxon>
        <taxon>Xenopodinae</taxon>
        <taxon>Xenopus</taxon>
        <taxon>Xenopus</taxon>
    </lineage>
</organism>
<comment type="function">
    <text evidence="1">Involved in nonsense-mediated mRNA decay (NMD) by acting as a bridge between the mRNA decapping complex and the NMD machinery. May act by targeting the NMD machinery to the P-body and recruiting the decapping machinery to aberrant mRNAs. Required for upf1/rent1 localization to the P-body. Also acts as a nuclear receptor coactivator (By similarity).</text>
</comment>
<comment type="subcellular location">
    <subcellularLocation>
        <location evidence="1">Nucleus</location>
    </subcellularLocation>
    <subcellularLocation>
        <location evidence="1">Cytoplasm</location>
        <location evidence="1">P-body</location>
    </subcellularLocation>
</comment>
<comment type="similarity">
    <text evidence="3">Belongs to the PNRC family. PNRC2 subfamily.</text>
</comment>
<name>PNC2B_XENLA</name>
<feature type="chain" id="PRO_0000377567" description="Proline-rich nuclear receptor coactivator 2 B">
    <location>
        <begin position="1"/>
        <end position="135"/>
    </location>
</feature>
<feature type="region of interest" description="Disordered" evidence="2">
    <location>
        <begin position="75"/>
        <end position="103"/>
    </location>
</feature>
<feature type="short sequence motif" description="SH3-binding">
    <location>
        <begin position="95"/>
        <end position="101"/>
    </location>
</feature>
<feature type="compositionally biased region" description="Polar residues" evidence="2">
    <location>
        <begin position="75"/>
        <end position="89"/>
    </location>
</feature>
<reference key="1">
    <citation type="submission" date="2004-10" db="EMBL/GenBank/DDBJ databases">
        <authorList>
            <consortium name="NIH - Xenopus Gene Collection (XGC) project"/>
        </authorList>
    </citation>
    <scope>NUCLEOTIDE SEQUENCE [LARGE SCALE MRNA]</scope>
    <source>
        <tissue>Embryo</tissue>
    </source>
</reference>
<accession>Q5XH28</accession>